<organism>
    <name type="scientific">Streptococcus agalactiae serotype V (strain ATCC BAA-611 / 2603 V/R)</name>
    <dbReference type="NCBI Taxonomy" id="208435"/>
    <lineage>
        <taxon>Bacteria</taxon>
        <taxon>Bacillati</taxon>
        <taxon>Bacillota</taxon>
        <taxon>Bacilli</taxon>
        <taxon>Lactobacillales</taxon>
        <taxon>Streptococcaceae</taxon>
        <taxon>Streptococcus</taxon>
    </lineage>
</organism>
<accession>Q8DY73</accession>
<keyword id="KW-0342">GTP-binding</keyword>
<keyword id="KW-0547">Nucleotide-binding</keyword>
<keyword id="KW-1185">Reference proteome</keyword>
<keyword id="KW-0677">Repeat</keyword>
<keyword id="KW-0690">Ribosome biogenesis</keyword>
<dbReference type="EMBL" id="AE009948">
    <property type="protein sequence ID" value="AAN00484.1"/>
    <property type="molecule type" value="Genomic_DNA"/>
</dbReference>
<dbReference type="RefSeq" id="NP_688611.1">
    <property type="nucleotide sequence ID" value="NC_004116.1"/>
</dbReference>
<dbReference type="RefSeq" id="WP_000244022.1">
    <property type="nucleotide sequence ID" value="NC_004116.1"/>
</dbReference>
<dbReference type="SMR" id="Q8DY73"/>
<dbReference type="STRING" id="208435.SAG1620"/>
<dbReference type="GeneID" id="66886464"/>
<dbReference type="KEGG" id="sag:SAG1620"/>
<dbReference type="PATRIC" id="fig|208435.3.peg.1631"/>
<dbReference type="HOGENOM" id="CLU_016077_6_2_9"/>
<dbReference type="OrthoDB" id="9805918at2"/>
<dbReference type="Proteomes" id="UP000000821">
    <property type="component" value="Chromosome"/>
</dbReference>
<dbReference type="GO" id="GO:0005525">
    <property type="term" value="F:GTP binding"/>
    <property type="evidence" value="ECO:0007669"/>
    <property type="project" value="UniProtKB-UniRule"/>
</dbReference>
<dbReference type="GO" id="GO:0043022">
    <property type="term" value="F:ribosome binding"/>
    <property type="evidence" value="ECO:0007669"/>
    <property type="project" value="TreeGrafter"/>
</dbReference>
<dbReference type="GO" id="GO:0042254">
    <property type="term" value="P:ribosome biogenesis"/>
    <property type="evidence" value="ECO:0007669"/>
    <property type="project" value="UniProtKB-KW"/>
</dbReference>
<dbReference type="CDD" id="cd01894">
    <property type="entry name" value="EngA1"/>
    <property type="match status" value="1"/>
</dbReference>
<dbReference type="CDD" id="cd01895">
    <property type="entry name" value="EngA2"/>
    <property type="match status" value="1"/>
</dbReference>
<dbReference type="FunFam" id="3.30.300.20:FF:000004">
    <property type="entry name" value="GTPase Der"/>
    <property type="match status" value="1"/>
</dbReference>
<dbReference type="FunFam" id="3.40.50.300:FF:000040">
    <property type="entry name" value="GTPase Der"/>
    <property type="match status" value="1"/>
</dbReference>
<dbReference type="FunFam" id="3.40.50.300:FF:000057">
    <property type="entry name" value="GTPase Der"/>
    <property type="match status" value="1"/>
</dbReference>
<dbReference type="Gene3D" id="3.30.300.20">
    <property type="match status" value="1"/>
</dbReference>
<dbReference type="Gene3D" id="3.40.50.300">
    <property type="entry name" value="P-loop containing nucleotide triphosphate hydrolases"/>
    <property type="match status" value="2"/>
</dbReference>
<dbReference type="HAMAP" id="MF_00195">
    <property type="entry name" value="GTPase_Der"/>
    <property type="match status" value="1"/>
</dbReference>
<dbReference type="InterPro" id="IPR031166">
    <property type="entry name" value="G_ENGA"/>
</dbReference>
<dbReference type="InterPro" id="IPR006073">
    <property type="entry name" value="GTP-bd"/>
</dbReference>
<dbReference type="InterPro" id="IPR016484">
    <property type="entry name" value="GTPase_Der"/>
</dbReference>
<dbReference type="InterPro" id="IPR032859">
    <property type="entry name" value="KH_dom-like"/>
</dbReference>
<dbReference type="InterPro" id="IPR015946">
    <property type="entry name" value="KH_dom-like_a/b"/>
</dbReference>
<dbReference type="InterPro" id="IPR027417">
    <property type="entry name" value="P-loop_NTPase"/>
</dbReference>
<dbReference type="InterPro" id="IPR005225">
    <property type="entry name" value="Small_GTP-bd"/>
</dbReference>
<dbReference type="NCBIfam" id="TIGR03594">
    <property type="entry name" value="GTPase_EngA"/>
    <property type="match status" value="1"/>
</dbReference>
<dbReference type="NCBIfam" id="TIGR00231">
    <property type="entry name" value="small_GTP"/>
    <property type="match status" value="2"/>
</dbReference>
<dbReference type="PANTHER" id="PTHR43834">
    <property type="entry name" value="GTPASE DER"/>
    <property type="match status" value="1"/>
</dbReference>
<dbReference type="PANTHER" id="PTHR43834:SF6">
    <property type="entry name" value="GTPASE DER"/>
    <property type="match status" value="1"/>
</dbReference>
<dbReference type="Pfam" id="PF14714">
    <property type="entry name" value="KH_dom-like"/>
    <property type="match status" value="1"/>
</dbReference>
<dbReference type="Pfam" id="PF01926">
    <property type="entry name" value="MMR_HSR1"/>
    <property type="match status" value="2"/>
</dbReference>
<dbReference type="PIRSF" id="PIRSF006485">
    <property type="entry name" value="GTP-binding_EngA"/>
    <property type="match status" value="1"/>
</dbReference>
<dbReference type="PRINTS" id="PR00326">
    <property type="entry name" value="GTP1OBG"/>
</dbReference>
<dbReference type="SUPFAM" id="SSF52540">
    <property type="entry name" value="P-loop containing nucleoside triphosphate hydrolases"/>
    <property type="match status" value="2"/>
</dbReference>
<dbReference type="PROSITE" id="PS51712">
    <property type="entry name" value="G_ENGA"/>
    <property type="match status" value="2"/>
</dbReference>
<name>DER_STRA5</name>
<protein>
    <recommendedName>
        <fullName evidence="1">GTPase Der</fullName>
    </recommendedName>
    <alternativeName>
        <fullName evidence="1">GTP-binding protein EngA</fullName>
    </alternativeName>
</protein>
<evidence type="ECO:0000255" key="1">
    <source>
        <dbReference type="HAMAP-Rule" id="MF_00195"/>
    </source>
</evidence>
<feature type="chain" id="PRO_0000179051" description="GTPase Der">
    <location>
        <begin position="1"/>
        <end position="436"/>
    </location>
</feature>
<feature type="domain" description="EngA-type G 1">
    <location>
        <begin position="4"/>
        <end position="167"/>
    </location>
</feature>
<feature type="domain" description="EngA-type G 2">
    <location>
        <begin position="175"/>
        <end position="351"/>
    </location>
</feature>
<feature type="domain" description="KH-like" evidence="1">
    <location>
        <begin position="352"/>
        <end position="436"/>
    </location>
</feature>
<feature type="binding site" evidence="1">
    <location>
        <begin position="10"/>
        <end position="17"/>
    </location>
    <ligand>
        <name>GTP</name>
        <dbReference type="ChEBI" id="CHEBI:37565"/>
        <label>1</label>
    </ligand>
</feature>
<feature type="binding site" evidence="1">
    <location>
        <begin position="57"/>
        <end position="61"/>
    </location>
    <ligand>
        <name>GTP</name>
        <dbReference type="ChEBI" id="CHEBI:37565"/>
        <label>1</label>
    </ligand>
</feature>
<feature type="binding site" evidence="1">
    <location>
        <begin position="119"/>
        <end position="122"/>
    </location>
    <ligand>
        <name>GTP</name>
        <dbReference type="ChEBI" id="CHEBI:37565"/>
        <label>1</label>
    </ligand>
</feature>
<feature type="binding site" evidence="1">
    <location>
        <begin position="181"/>
        <end position="188"/>
    </location>
    <ligand>
        <name>GTP</name>
        <dbReference type="ChEBI" id="CHEBI:37565"/>
        <label>2</label>
    </ligand>
</feature>
<feature type="binding site" evidence="1">
    <location>
        <begin position="229"/>
        <end position="233"/>
    </location>
    <ligand>
        <name>GTP</name>
        <dbReference type="ChEBI" id="CHEBI:37565"/>
        <label>2</label>
    </ligand>
</feature>
<feature type="binding site" evidence="1">
    <location>
        <begin position="294"/>
        <end position="297"/>
    </location>
    <ligand>
        <name>GTP</name>
        <dbReference type="ChEBI" id="CHEBI:37565"/>
        <label>2</label>
    </ligand>
</feature>
<proteinExistence type="inferred from homology"/>
<gene>
    <name evidence="1" type="primary">der</name>
    <name type="synonym">engA</name>
    <name type="ordered locus">SAG1620</name>
</gene>
<comment type="function">
    <text evidence="1">GTPase that plays an essential role in the late steps of ribosome biogenesis.</text>
</comment>
<comment type="subunit">
    <text evidence="1">Associates with the 50S ribosomal subunit.</text>
</comment>
<comment type="similarity">
    <text evidence="1">Belongs to the TRAFAC class TrmE-Era-EngA-EngB-Septin-like GTPase superfamily. EngA (Der) GTPase family.</text>
</comment>
<sequence length="436" mass="48981">MVLPTVAIVGRPNVGKSTLFNRIAGERISIVEDVEGVTRDRIYTTGEWLNRKFSLIDTGGIDDVDAPFMEQIKHQADIAMTEADVIVFVVSGKEGVTDADEYVSRILYKTNKPVILAVNKVDNPEMRNDIYDFYSLGLGDPYPLSSVHGIGTGDILDAIVENLPVEEENENPDIIRFSLIGRPNVGKSSLINAILGEDRVIASPVAGTTRDAIDTNFVDSQGQEYTMIDTAGMRKSGKVYENTEKYSVMRSMRAIDRSDVVLMVINAEEGIREYDKRIAGFAHETGKGIIIVVNKWDTIEKDNHTVSQWEADIRDNFQFLSYAPIIFVSAETKQRLHKLPDMIKRISESQNKRIPSAVLNDVIMDAIAINPTPTDKGKRLKIFYATQVAVKPPTFVVFVNEEELMHFSYLRFLENQIREAFVFEGTPINLIARKRK</sequence>
<reference key="1">
    <citation type="journal article" date="2002" name="Proc. Natl. Acad. Sci. U.S.A.">
        <title>Complete genome sequence and comparative genomic analysis of an emerging human pathogen, serotype V Streptococcus agalactiae.</title>
        <authorList>
            <person name="Tettelin H."/>
            <person name="Masignani V."/>
            <person name="Cieslewicz M.J."/>
            <person name="Eisen J.A."/>
            <person name="Peterson S.N."/>
            <person name="Wessels M.R."/>
            <person name="Paulsen I.T."/>
            <person name="Nelson K.E."/>
            <person name="Margarit I."/>
            <person name="Read T.D."/>
            <person name="Madoff L.C."/>
            <person name="Wolf A.M."/>
            <person name="Beanan M.J."/>
            <person name="Brinkac L.M."/>
            <person name="Daugherty S.C."/>
            <person name="DeBoy R.T."/>
            <person name="Durkin A.S."/>
            <person name="Kolonay J.F."/>
            <person name="Madupu R."/>
            <person name="Lewis M.R."/>
            <person name="Radune D."/>
            <person name="Fedorova N.B."/>
            <person name="Scanlan D."/>
            <person name="Khouri H.M."/>
            <person name="Mulligan S."/>
            <person name="Carty H.A."/>
            <person name="Cline R.T."/>
            <person name="Van Aken S.E."/>
            <person name="Gill J."/>
            <person name="Scarselli M."/>
            <person name="Mora M."/>
            <person name="Iacobini E.T."/>
            <person name="Brettoni C."/>
            <person name="Galli G."/>
            <person name="Mariani M."/>
            <person name="Vegni F."/>
            <person name="Maione D."/>
            <person name="Rinaudo D."/>
            <person name="Rappuoli R."/>
            <person name="Telford J.L."/>
            <person name="Kasper D.L."/>
            <person name="Grandi G."/>
            <person name="Fraser C.M."/>
        </authorList>
    </citation>
    <scope>NUCLEOTIDE SEQUENCE [LARGE SCALE GENOMIC DNA]</scope>
    <source>
        <strain>ATCC BAA-611 / 2603 V/R</strain>
    </source>
</reference>